<name>TRM5_CIOIN</name>
<comment type="function">
    <text evidence="1">Specifically methylates the N1 position of guanosine-37 in various cytoplasmic and mitochondrial tRNAs. Methylation is not dependent on the nature of the nucleoside 5' of the target nucleoside. This is the first step in the biosynthesis of wybutosine (yW), a modified base adjacent to the anticodon of tRNAs and required for accurate decoding.</text>
</comment>
<comment type="catalytic activity">
    <reaction evidence="1">
        <text>guanosine(37) in tRNA + S-adenosyl-L-methionine = N(1)-methylguanosine(37) in tRNA + S-adenosyl-L-homocysteine + H(+)</text>
        <dbReference type="Rhea" id="RHEA:36899"/>
        <dbReference type="Rhea" id="RHEA-COMP:10145"/>
        <dbReference type="Rhea" id="RHEA-COMP:10147"/>
        <dbReference type="ChEBI" id="CHEBI:15378"/>
        <dbReference type="ChEBI" id="CHEBI:57856"/>
        <dbReference type="ChEBI" id="CHEBI:59789"/>
        <dbReference type="ChEBI" id="CHEBI:73542"/>
        <dbReference type="ChEBI" id="CHEBI:74269"/>
        <dbReference type="EC" id="2.1.1.228"/>
    </reaction>
</comment>
<comment type="subunit">
    <text evidence="1">Monomer.</text>
</comment>
<comment type="subcellular location">
    <subcellularLocation>
        <location evidence="1">Mitochondrion matrix</location>
    </subcellularLocation>
    <subcellularLocation>
        <location evidence="1">Nucleus</location>
    </subcellularLocation>
    <subcellularLocation>
        <location evidence="1">Cytoplasm</location>
    </subcellularLocation>
    <text evidence="1">Predominantly in the mitochondria and in the nucleus.</text>
</comment>
<comment type="similarity">
    <text evidence="2">Belongs to the class I-like SAM-binding methyltransferase superfamily. TRM5/TYW2 family.</text>
</comment>
<protein>
    <recommendedName>
        <fullName evidence="1">tRNA (guanine(37)-N(1))-methyltransferase</fullName>
        <ecNumber evidence="1">2.1.1.228</ecNumber>
    </recommendedName>
    <alternativeName>
        <fullName evidence="1">M1G-methyltransferase</fullName>
    </alternativeName>
    <alternativeName>
        <fullName evidence="1">tRNA [GM37] methyltransferase</fullName>
    </alternativeName>
    <alternativeName>
        <fullName evidence="1">tRNA methyltransferase 5 homolog</fullName>
    </alternativeName>
</protein>
<evidence type="ECO:0000255" key="1">
    <source>
        <dbReference type="HAMAP-Rule" id="MF_03152"/>
    </source>
</evidence>
<evidence type="ECO:0000305" key="2"/>
<organism>
    <name type="scientific">Ciona intestinalis</name>
    <name type="common">Transparent sea squirt</name>
    <name type="synonym">Ascidia intestinalis</name>
    <dbReference type="NCBI Taxonomy" id="7719"/>
    <lineage>
        <taxon>Eukaryota</taxon>
        <taxon>Metazoa</taxon>
        <taxon>Chordata</taxon>
        <taxon>Tunicata</taxon>
        <taxon>Ascidiacea</taxon>
        <taxon>Phlebobranchia</taxon>
        <taxon>Cionidae</taxon>
        <taxon>Ciona</taxon>
    </lineage>
</organism>
<keyword id="KW-0963">Cytoplasm</keyword>
<keyword id="KW-0489">Methyltransferase</keyword>
<keyword id="KW-0496">Mitochondrion</keyword>
<keyword id="KW-0539">Nucleus</keyword>
<keyword id="KW-1185">Reference proteome</keyword>
<keyword id="KW-0949">S-adenosyl-L-methionine</keyword>
<keyword id="KW-0808">Transferase</keyword>
<keyword id="KW-0819">tRNA processing</keyword>
<proteinExistence type="inferred from homology"/>
<sequence>MVIAYIRNLIRKVIQRGMDHEHSALYPPAAVRGMKVLDRSAFEQEVTLPALLVPVQSLRNCRKMMKSKLVNLSINKKVVDPPAHLVGEELTAGHKLFLLKPGTTMETYSSDEKQMLGKLGVKDKIYDYRITLGYENYKHWDVLRAILPDSEMAARGFSQVGHILHVNLRDHQLPYKHIIGQVLLDKIQTARTVVNKHQNIDNKFRNFEMEVIAGENNFVTRIIEHGRKFEFDFSKVFWNSRLSTEHQRITNFVSESDVVFDVFAGVGPFAIPIAKKGCVVYANDLNPESYRWLLHNVALNKTKAKCFNSDGREFIQTELRNYLLTRSPHKVHVLMNLPAIAVEFLDVFRGLLCNGDCLAANDLSNASHKKLLSIPEVCVHLYIFAPEKDGIADLKSRIKQSLGCALPEDAVIYNVRNVAPKKQMYCVSFVLSQHWMDQKEQDVYEPAPKKIKECIS</sequence>
<reference key="1">
    <citation type="journal article" date="2002" name="Science">
        <title>The draft genome of Ciona intestinalis: insights into chordate and vertebrate origins.</title>
        <authorList>
            <person name="Dehal P."/>
            <person name="Satou Y."/>
            <person name="Campbell R.K."/>
            <person name="Chapman J."/>
            <person name="Degnan B."/>
            <person name="De Tomaso A."/>
            <person name="Davidson B."/>
            <person name="Di Gregorio A."/>
            <person name="Gelpke M."/>
            <person name="Goodstein D.M."/>
            <person name="Harafuji N."/>
            <person name="Hastings K.E."/>
            <person name="Ho I."/>
            <person name="Hotta K."/>
            <person name="Huang W."/>
            <person name="Kawashima T."/>
            <person name="Lemaire P."/>
            <person name="Martinez D."/>
            <person name="Meinertzhagen I.A."/>
            <person name="Necula S."/>
            <person name="Nonaka M."/>
            <person name="Putnam N."/>
            <person name="Rash S."/>
            <person name="Saiga H."/>
            <person name="Satake M."/>
            <person name="Terry A."/>
            <person name="Yamada L."/>
            <person name="Wang H.G."/>
            <person name="Awazu S."/>
            <person name="Azumi K."/>
            <person name="Boore J."/>
            <person name="Branno M."/>
            <person name="Chin-Bow S."/>
            <person name="DeSantis R."/>
            <person name="Doyle S."/>
            <person name="Francino P."/>
            <person name="Keys D.N."/>
            <person name="Haga S."/>
            <person name="Hayashi H."/>
            <person name="Hino K."/>
            <person name="Imai K.S."/>
            <person name="Inaba K."/>
            <person name="Kano S."/>
            <person name="Kobayashi K."/>
            <person name="Kobayashi M."/>
            <person name="Lee B.I."/>
            <person name="Makabe K.W."/>
            <person name="Manohar C."/>
            <person name="Matassi G."/>
            <person name="Medina M."/>
            <person name="Mochizuki Y."/>
            <person name="Mount S."/>
            <person name="Morishita T."/>
            <person name="Miura S."/>
            <person name="Nakayama A."/>
            <person name="Nishizaka S."/>
            <person name="Nomoto H."/>
            <person name="Ohta F."/>
            <person name="Oishi K."/>
            <person name="Rigoutsos I."/>
            <person name="Sano M."/>
            <person name="Sasaki A."/>
            <person name="Sasakura Y."/>
            <person name="Shoguchi E."/>
            <person name="Shin-i T."/>
            <person name="Spagnuolo A."/>
            <person name="Stainier D."/>
            <person name="Suzuki M.M."/>
            <person name="Tassy O."/>
            <person name="Takatori N."/>
            <person name="Tokuoka M."/>
            <person name="Yagi K."/>
            <person name="Yoshizaki F."/>
            <person name="Wada S."/>
            <person name="Zhang C."/>
            <person name="Hyatt P.D."/>
            <person name="Larimer F."/>
            <person name="Detter C."/>
            <person name="Doggett N."/>
            <person name="Glavina T."/>
            <person name="Hawkins T."/>
            <person name="Richardson P."/>
            <person name="Lucas S."/>
            <person name="Kohara Y."/>
            <person name="Levine M."/>
            <person name="Satoh N."/>
            <person name="Rokhsar D.S."/>
        </authorList>
    </citation>
    <scope>NUCLEOTIDE SEQUENCE [LARGE SCALE GENOMIC DNA]</scope>
</reference>
<accession>F7A355</accession>
<feature type="chain" id="PRO_0000414125" description="tRNA (guanine(37)-N(1))-methyltransferase">
    <location>
        <begin position="1"/>
        <end position="456"/>
    </location>
</feature>
<feature type="binding site" evidence="1">
    <location>
        <position position="246"/>
    </location>
    <ligand>
        <name>S-adenosyl-L-methionine</name>
        <dbReference type="ChEBI" id="CHEBI:59789"/>
    </ligand>
</feature>
<feature type="binding site" evidence="1">
    <location>
        <begin position="284"/>
        <end position="285"/>
    </location>
    <ligand>
        <name>S-adenosyl-L-methionine</name>
        <dbReference type="ChEBI" id="CHEBI:59789"/>
    </ligand>
</feature>
<feature type="binding site" evidence="1">
    <location>
        <begin position="310"/>
        <end position="311"/>
    </location>
    <ligand>
        <name>S-adenosyl-L-methionine</name>
        <dbReference type="ChEBI" id="CHEBI:59789"/>
    </ligand>
</feature>
<feature type="binding site" evidence="1">
    <location>
        <position position="336"/>
    </location>
    <ligand>
        <name>S-adenosyl-L-methionine</name>
        <dbReference type="ChEBI" id="CHEBI:59789"/>
    </ligand>
</feature>
<dbReference type="EC" id="2.1.1.228" evidence="1"/>
<dbReference type="RefSeq" id="XP_002124503.1">
    <property type="nucleotide sequence ID" value="XM_002124467.4"/>
</dbReference>
<dbReference type="SMR" id="F7A355"/>
<dbReference type="FunCoup" id="F7A355">
    <property type="interactions" value="151"/>
</dbReference>
<dbReference type="STRING" id="7719.ENSCINP00000024851"/>
<dbReference type="GeneID" id="100180256"/>
<dbReference type="KEGG" id="cin:100180256"/>
<dbReference type="eggNOG" id="KOG2078">
    <property type="taxonomic scope" value="Eukaryota"/>
</dbReference>
<dbReference type="InParanoid" id="F7A355"/>
<dbReference type="OrthoDB" id="408788at2759"/>
<dbReference type="Proteomes" id="UP000008144">
    <property type="component" value="Unplaced"/>
</dbReference>
<dbReference type="GO" id="GO:0005737">
    <property type="term" value="C:cytoplasm"/>
    <property type="evidence" value="ECO:0000318"/>
    <property type="project" value="GO_Central"/>
</dbReference>
<dbReference type="GO" id="GO:0005759">
    <property type="term" value="C:mitochondrial matrix"/>
    <property type="evidence" value="ECO:0000318"/>
    <property type="project" value="GO_Central"/>
</dbReference>
<dbReference type="GO" id="GO:0005634">
    <property type="term" value="C:nucleus"/>
    <property type="evidence" value="ECO:0007669"/>
    <property type="project" value="UniProtKB-SubCell"/>
</dbReference>
<dbReference type="GO" id="GO:0052906">
    <property type="term" value="F:tRNA (guanine(37)-N1)-methyltransferase activity"/>
    <property type="evidence" value="ECO:0007669"/>
    <property type="project" value="UniProtKB-UniRule"/>
</dbReference>
<dbReference type="GO" id="GO:0008175">
    <property type="term" value="F:tRNA methyltransferase activity"/>
    <property type="evidence" value="ECO:0000318"/>
    <property type="project" value="GO_Central"/>
</dbReference>
<dbReference type="GO" id="GO:0070901">
    <property type="term" value="P:mitochondrial tRNA methylation"/>
    <property type="evidence" value="ECO:0000318"/>
    <property type="project" value="GO_Central"/>
</dbReference>
<dbReference type="GO" id="GO:0002939">
    <property type="term" value="P:tRNA N1-guanine methylation"/>
    <property type="evidence" value="ECO:0000318"/>
    <property type="project" value="GO_Central"/>
</dbReference>
<dbReference type="CDD" id="cd02440">
    <property type="entry name" value="AdoMet_MTases"/>
    <property type="match status" value="1"/>
</dbReference>
<dbReference type="FunFam" id="3.30.300.110:FF:000001">
    <property type="entry name" value="tRNA (guanine(37)-N1)-methyltransferase"/>
    <property type="match status" value="1"/>
</dbReference>
<dbReference type="Gene3D" id="3.30.300.110">
    <property type="entry name" value="Met-10+ protein-like domains"/>
    <property type="match status" value="1"/>
</dbReference>
<dbReference type="Gene3D" id="3.40.50.150">
    <property type="entry name" value="Vaccinia Virus protein VP39"/>
    <property type="match status" value="1"/>
</dbReference>
<dbReference type="HAMAP" id="MF_03152">
    <property type="entry name" value="TRM5"/>
    <property type="match status" value="1"/>
</dbReference>
<dbReference type="InterPro" id="IPR030382">
    <property type="entry name" value="MeTrfase_TRM5/TYW2"/>
</dbReference>
<dbReference type="InterPro" id="IPR029063">
    <property type="entry name" value="SAM-dependent_MTases_sf"/>
</dbReference>
<dbReference type="InterPro" id="IPR056743">
    <property type="entry name" value="TRM5-TYW2-like_MTfase"/>
</dbReference>
<dbReference type="InterPro" id="IPR056744">
    <property type="entry name" value="TRM5/TYW2-like_N"/>
</dbReference>
<dbReference type="InterPro" id="IPR025792">
    <property type="entry name" value="tRNA_Gua_MeTrfase_euk"/>
</dbReference>
<dbReference type="PANTHER" id="PTHR23245:SF36">
    <property type="entry name" value="TRNA (GUANINE(37)-N1)-METHYLTRANSFERASE"/>
    <property type="match status" value="1"/>
</dbReference>
<dbReference type="PANTHER" id="PTHR23245">
    <property type="entry name" value="TRNA METHYLTRANSFERASE"/>
    <property type="match status" value="1"/>
</dbReference>
<dbReference type="Pfam" id="PF02475">
    <property type="entry name" value="TRM5-TYW2_MTfase"/>
    <property type="match status" value="1"/>
</dbReference>
<dbReference type="Pfam" id="PF25133">
    <property type="entry name" value="TYW2_N_2"/>
    <property type="match status" value="1"/>
</dbReference>
<dbReference type="SUPFAM" id="SSF53335">
    <property type="entry name" value="S-adenosyl-L-methionine-dependent methyltransferases"/>
    <property type="match status" value="1"/>
</dbReference>
<dbReference type="PROSITE" id="PS51684">
    <property type="entry name" value="SAM_MT_TRM5_TYW2"/>
    <property type="match status" value="1"/>
</dbReference>